<comment type="function">
    <text evidence="1">Catalyzes the reversible phosphorylation of UMP to UDP.</text>
</comment>
<comment type="catalytic activity">
    <reaction evidence="1">
        <text>UMP + ATP = UDP + ADP</text>
        <dbReference type="Rhea" id="RHEA:24400"/>
        <dbReference type="ChEBI" id="CHEBI:30616"/>
        <dbReference type="ChEBI" id="CHEBI:57865"/>
        <dbReference type="ChEBI" id="CHEBI:58223"/>
        <dbReference type="ChEBI" id="CHEBI:456216"/>
        <dbReference type="EC" id="2.7.4.22"/>
    </reaction>
</comment>
<comment type="activity regulation">
    <text evidence="1">Inhibited by UTP.</text>
</comment>
<comment type="pathway">
    <text evidence="1">Pyrimidine metabolism; CTP biosynthesis via de novo pathway; UDP from UMP (UMPK route): step 1/1.</text>
</comment>
<comment type="subunit">
    <text evidence="1">Homohexamer.</text>
</comment>
<comment type="subcellular location">
    <subcellularLocation>
        <location evidence="1">Cytoplasm</location>
    </subcellularLocation>
</comment>
<comment type="similarity">
    <text evidence="1">Belongs to the UMP kinase family.</text>
</comment>
<sequence length="237" mass="25589">MTGYKRVLLKLSGEMFGGGKVGVDPDVVQTVAREIAAVVNAGVQIAIVTGGGNFFRGAELQQRGMDRVRADYMGMLGIVMNCLALQDFLEKLGVETRVQTAITMGQVAEPYIPRRAIRHMEKGRVVIFGAGMGMPFFSTDTVAVQRALESRCDVVLVAKNGVDGVYTADPHKDPTATKFDDLTYDEAIARGLRIMDQTAFALCGENKLPMVVFGMEPEGNILRVVQGERIGTLVTAG</sequence>
<dbReference type="EC" id="2.7.4.22" evidence="1"/>
<dbReference type="EMBL" id="CP000509">
    <property type="protein sequence ID" value="ABL82743.1"/>
    <property type="molecule type" value="Genomic_DNA"/>
</dbReference>
<dbReference type="RefSeq" id="WP_011756677.1">
    <property type="nucleotide sequence ID" value="NC_008699.1"/>
</dbReference>
<dbReference type="SMR" id="A1SLQ8"/>
<dbReference type="STRING" id="196162.Noca_3241"/>
<dbReference type="KEGG" id="nca:Noca_3241"/>
<dbReference type="eggNOG" id="COG0528">
    <property type="taxonomic scope" value="Bacteria"/>
</dbReference>
<dbReference type="HOGENOM" id="CLU_033861_0_0_11"/>
<dbReference type="OrthoDB" id="9807458at2"/>
<dbReference type="UniPathway" id="UPA00159">
    <property type="reaction ID" value="UER00275"/>
</dbReference>
<dbReference type="Proteomes" id="UP000000640">
    <property type="component" value="Chromosome"/>
</dbReference>
<dbReference type="GO" id="GO:0005737">
    <property type="term" value="C:cytoplasm"/>
    <property type="evidence" value="ECO:0007669"/>
    <property type="project" value="UniProtKB-SubCell"/>
</dbReference>
<dbReference type="GO" id="GO:0005524">
    <property type="term" value="F:ATP binding"/>
    <property type="evidence" value="ECO:0007669"/>
    <property type="project" value="UniProtKB-KW"/>
</dbReference>
<dbReference type="GO" id="GO:0033862">
    <property type="term" value="F:UMP kinase activity"/>
    <property type="evidence" value="ECO:0007669"/>
    <property type="project" value="UniProtKB-EC"/>
</dbReference>
<dbReference type="GO" id="GO:0044210">
    <property type="term" value="P:'de novo' CTP biosynthetic process"/>
    <property type="evidence" value="ECO:0007669"/>
    <property type="project" value="UniProtKB-UniRule"/>
</dbReference>
<dbReference type="GO" id="GO:0006225">
    <property type="term" value="P:UDP biosynthetic process"/>
    <property type="evidence" value="ECO:0007669"/>
    <property type="project" value="TreeGrafter"/>
</dbReference>
<dbReference type="CDD" id="cd04254">
    <property type="entry name" value="AAK_UMPK-PyrH-Ec"/>
    <property type="match status" value="1"/>
</dbReference>
<dbReference type="FunFam" id="3.40.1160.10:FF:000001">
    <property type="entry name" value="Uridylate kinase"/>
    <property type="match status" value="1"/>
</dbReference>
<dbReference type="Gene3D" id="3.40.1160.10">
    <property type="entry name" value="Acetylglutamate kinase-like"/>
    <property type="match status" value="1"/>
</dbReference>
<dbReference type="HAMAP" id="MF_01220_B">
    <property type="entry name" value="PyrH_B"/>
    <property type="match status" value="1"/>
</dbReference>
<dbReference type="InterPro" id="IPR036393">
    <property type="entry name" value="AceGlu_kinase-like_sf"/>
</dbReference>
<dbReference type="InterPro" id="IPR001048">
    <property type="entry name" value="Asp/Glu/Uridylate_kinase"/>
</dbReference>
<dbReference type="InterPro" id="IPR011817">
    <property type="entry name" value="Uridylate_kinase"/>
</dbReference>
<dbReference type="InterPro" id="IPR015963">
    <property type="entry name" value="Uridylate_kinase_bac"/>
</dbReference>
<dbReference type="NCBIfam" id="TIGR02075">
    <property type="entry name" value="pyrH_bact"/>
    <property type="match status" value="1"/>
</dbReference>
<dbReference type="PANTHER" id="PTHR42833">
    <property type="entry name" value="URIDYLATE KINASE"/>
    <property type="match status" value="1"/>
</dbReference>
<dbReference type="PANTHER" id="PTHR42833:SF4">
    <property type="entry name" value="URIDYLATE KINASE PUMPKIN, CHLOROPLASTIC"/>
    <property type="match status" value="1"/>
</dbReference>
<dbReference type="Pfam" id="PF00696">
    <property type="entry name" value="AA_kinase"/>
    <property type="match status" value="1"/>
</dbReference>
<dbReference type="PIRSF" id="PIRSF005650">
    <property type="entry name" value="Uridylate_kin"/>
    <property type="match status" value="1"/>
</dbReference>
<dbReference type="SUPFAM" id="SSF53633">
    <property type="entry name" value="Carbamate kinase-like"/>
    <property type="match status" value="1"/>
</dbReference>
<protein>
    <recommendedName>
        <fullName evidence="1">Uridylate kinase</fullName>
        <shortName evidence="1">UK</shortName>
        <ecNumber evidence="1">2.7.4.22</ecNumber>
    </recommendedName>
    <alternativeName>
        <fullName evidence="1">Uridine monophosphate kinase</fullName>
        <shortName evidence="1">UMP kinase</shortName>
        <shortName evidence="1">UMPK</shortName>
    </alternativeName>
</protein>
<organism>
    <name type="scientific">Nocardioides sp. (strain ATCC BAA-499 / JS614)</name>
    <dbReference type="NCBI Taxonomy" id="196162"/>
    <lineage>
        <taxon>Bacteria</taxon>
        <taxon>Bacillati</taxon>
        <taxon>Actinomycetota</taxon>
        <taxon>Actinomycetes</taxon>
        <taxon>Propionibacteriales</taxon>
        <taxon>Nocardioidaceae</taxon>
        <taxon>Nocardioides</taxon>
    </lineage>
</organism>
<feature type="chain" id="PRO_0000323909" description="Uridylate kinase">
    <location>
        <begin position="1"/>
        <end position="237"/>
    </location>
</feature>
<feature type="binding site" evidence="1">
    <location>
        <begin position="10"/>
        <end position="13"/>
    </location>
    <ligand>
        <name>ATP</name>
        <dbReference type="ChEBI" id="CHEBI:30616"/>
    </ligand>
</feature>
<feature type="binding site" evidence="1">
    <location>
        <position position="51"/>
    </location>
    <ligand>
        <name>UMP</name>
        <dbReference type="ChEBI" id="CHEBI:57865"/>
    </ligand>
</feature>
<feature type="binding site" evidence="1">
    <location>
        <position position="52"/>
    </location>
    <ligand>
        <name>ATP</name>
        <dbReference type="ChEBI" id="CHEBI:30616"/>
    </ligand>
</feature>
<feature type="binding site" evidence="1">
    <location>
        <position position="56"/>
    </location>
    <ligand>
        <name>ATP</name>
        <dbReference type="ChEBI" id="CHEBI:30616"/>
    </ligand>
</feature>
<feature type="binding site" evidence="1">
    <location>
        <position position="71"/>
    </location>
    <ligand>
        <name>UMP</name>
        <dbReference type="ChEBI" id="CHEBI:57865"/>
    </ligand>
</feature>
<feature type="binding site" evidence="1">
    <location>
        <begin position="132"/>
        <end position="139"/>
    </location>
    <ligand>
        <name>UMP</name>
        <dbReference type="ChEBI" id="CHEBI:57865"/>
    </ligand>
</feature>
<feature type="binding site" evidence="1">
    <location>
        <position position="160"/>
    </location>
    <ligand>
        <name>ATP</name>
        <dbReference type="ChEBI" id="CHEBI:30616"/>
    </ligand>
</feature>
<feature type="binding site" evidence="1">
    <location>
        <position position="166"/>
    </location>
    <ligand>
        <name>ATP</name>
        <dbReference type="ChEBI" id="CHEBI:30616"/>
    </ligand>
</feature>
<feature type="binding site" evidence="1">
    <location>
        <position position="169"/>
    </location>
    <ligand>
        <name>ATP</name>
        <dbReference type="ChEBI" id="CHEBI:30616"/>
    </ligand>
</feature>
<gene>
    <name evidence="1" type="primary">pyrH</name>
    <name type="ordered locus">Noca_3241</name>
</gene>
<reference key="1">
    <citation type="submission" date="2006-12" db="EMBL/GenBank/DDBJ databases">
        <title>Complete sequence of chromosome 1 of Nocardioides sp. JS614.</title>
        <authorList>
            <person name="Copeland A."/>
            <person name="Lucas S."/>
            <person name="Lapidus A."/>
            <person name="Barry K."/>
            <person name="Detter J.C."/>
            <person name="Glavina del Rio T."/>
            <person name="Hammon N."/>
            <person name="Israni S."/>
            <person name="Dalin E."/>
            <person name="Tice H."/>
            <person name="Pitluck S."/>
            <person name="Thompson L.S."/>
            <person name="Brettin T."/>
            <person name="Bruce D."/>
            <person name="Han C."/>
            <person name="Tapia R."/>
            <person name="Schmutz J."/>
            <person name="Larimer F."/>
            <person name="Land M."/>
            <person name="Hauser L."/>
            <person name="Kyrpides N."/>
            <person name="Kim E."/>
            <person name="Mattes T."/>
            <person name="Gossett J."/>
            <person name="Richardson P."/>
        </authorList>
    </citation>
    <scope>NUCLEOTIDE SEQUENCE [LARGE SCALE GENOMIC DNA]</scope>
    <source>
        <strain>ATCC BAA-499 / JS614</strain>
    </source>
</reference>
<accession>A1SLQ8</accession>
<evidence type="ECO:0000255" key="1">
    <source>
        <dbReference type="HAMAP-Rule" id="MF_01220"/>
    </source>
</evidence>
<name>PYRH_NOCSJ</name>
<keyword id="KW-0067">ATP-binding</keyword>
<keyword id="KW-0963">Cytoplasm</keyword>
<keyword id="KW-0418">Kinase</keyword>
<keyword id="KW-0547">Nucleotide-binding</keyword>
<keyword id="KW-0665">Pyrimidine biosynthesis</keyword>
<keyword id="KW-1185">Reference proteome</keyword>
<keyword id="KW-0808">Transferase</keyword>
<proteinExistence type="inferred from homology"/>